<organism>
    <name type="scientific">Neorickettsia sennetsu (strain ATCC VR-367 / Miyayama)</name>
    <name type="common">Ehrlichia sennetsu</name>
    <dbReference type="NCBI Taxonomy" id="222891"/>
    <lineage>
        <taxon>Bacteria</taxon>
        <taxon>Pseudomonadati</taxon>
        <taxon>Pseudomonadota</taxon>
        <taxon>Alphaproteobacteria</taxon>
        <taxon>Rickettsiales</taxon>
        <taxon>Anaplasmataceae</taxon>
        <taxon>Neorickettsia</taxon>
    </lineage>
</organism>
<keyword id="KW-0687">Ribonucleoprotein</keyword>
<keyword id="KW-0689">Ribosomal protein</keyword>
<keyword id="KW-0694">RNA-binding</keyword>
<keyword id="KW-0699">rRNA-binding</keyword>
<feature type="chain" id="PRO_0000244217" description="Large ribosomal subunit protein bL25">
    <location>
        <begin position="1"/>
        <end position="194"/>
    </location>
</feature>
<dbReference type="EMBL" id="CP000237">
    <property type="protein sequence ID" value="ABD46173.1"/>
    <property type="molecule type" value="Genomic_DNA"/>
</dbReference>
<dbReference type="RefSeq" id="WP_011451702.1">
    <property type="nucleotide sequence ID" value="NC_007798.1"/>
</dbReference>
<dbReference type="SMR" id="Q2GEA0"/>
<dbReference type="STRING" id="222891.NSE_0306"/>
<dbReference type="KEGG" id="nse:NSE_0306"/>
<dbReference type="eggNOG" id="COG1825">
    <property type="taxonomic scope" value="Bacteria"/>
</dbReference>
<dbReference type="HOGENOM" id="CLU_075939_2_1_5"/>
<dbReference type="OrthoDB" id="9806411at2"/>
<dbReference type="Proteomes" id="UP000001942">
    <property type="component" value="Chromosome"/>
</dbReference>
<dbReference type="GO" id="GO:0022625">
    <property type="term" value="C:cytosolic large ribosomal subunit"/>
    <property type="evidence" value="ECO:0007669"/>
    <property type="project" value="TreeGrafter"/>
</dbReference>
<dbReference type="GO" id="GO:0008097">
    <property type="term" value="F:5S rRNA binding"/>
    <property type="evidence" value="ECO:0007669"/>
    <property type="project" value="InterPro"/>
</dbReference>
<dbReference type="GO" id="GO:0003735">
    <property type="term" value="F:structural constituent of ribosome"/>
    <property type="evidence" value="ECO:0007669"/>
    <property type="project" value="InterPro"/>
</dbReference>
<dbReference type="GO" id="GO:0006412">
    <property type="term" value="P:translation"/>
    <property type="evidence" value="ECO:0007669"/>
    <property type="project" value="UniProtKB-UniRule"/>
</dbReference>
<dbReference type="CDD" id="cd00495">
    <property type="entry name" value="Ribosomal_L25_TL5_CTC"/>
    <property type="match status" value="1"/>
</dbReference>
<dbReference type="Gene3D" id="2.170.120.20">
    <property type="entry name" value="Ribosomal protein L25, beta domain"/>
    <property type="match status" value="1"/>
</dbReference>
<dbReference type="Gene3D" id="2.40.240.10">
    <property type="entry name" value="Ribosomal Protein L25, Chain P"/>
    <property type="match status" value="1"/>
</dbReference>
<dbReference type="HAMAP" id="MF_01334">
    <property type="entry name" value="Ribosomal_bL25_CTC"/>
    <property type="match status" value="1"/>
</dbReference>
<dbReference type="InterPro" id="IPR020056">
    <property type="entry name" value="Rbsml_bL25/Gln-tRNA_synth_N"/>
</dbReference>
<dbReference type="InterPro" id="IPR011035">
    <property type="entry name" value="Ribosomal_bL25/Gln-tRNA_synth"/>
</dbReference>
<dbReference type="InterPro" id="IPR020057">
    <property type="entry name" value="Ribosomal_bL25_b-dom"/>
</dbReference>
<dbReference type="InterPro" id="IPR037121">
    <property type="entry name" value="Ribosomal_bL25_C"/>
</dbReference>
<dbReference type="InterPro" id="IPR001021">
    <property type="entry name" value="Ribosomal_bL25_long"/>
</dbReference>
<dbReference type="InterPro" id="IPR029751">
    <property type="entry name" value="Ribosomal_L25_dom"/>
</dbReference>
<dbReference type="InterPro" id="IPR020930">
    <property type="entry name" value="Ribosomal_uL5_bac-type"/>
</dbReference>
<dbReference type="NCBIfam" id="TIGR00731">
    <property type="entry name" value="bL25_bact_ctc"/>
    <property type="match status" value="1"/>
</dbReference>
<dbReference type="PANTHER" id="PTHR33284">
    <property type="entry name" value="RIBOSOMAL PROTEIN L25/GLN-TRNA SYNTHETASE, ANTI-CODON-BINDING DOMAIN-CONTAINING PROTEIN"/>
    <property type="match status" value="1"/>
</dbReference>
<dbReference type="PANTHER" id="PTHR33284:SF1">
    <property type="entry name" value="RIBOSOMAL PROTEIN L25_GLN-TRNA SYNTHETASE, ANTI-CODON-BINDING DOMAIN-CONTAINING PROTEIN"/>
    <property type="match status" value="1"/>
</dbReference>
<dbReference type="Pfam" id="PF01386">
    <property type="entry name" value="Ribosomal_L25p"/>
    <property type="match status" value="1"/>
</dbReference>
<dbReference type="Pfam" id="PF14693">
    <property type="entry name" value="Ribosomal_TL5_C"/>
    <property type="match status" value="1"/>
</dbReference>
<dbReference type="SUPFAM" id="SSF50715">
    <property type="entry name" value="Ribosomal protein L25-like"/>
    <property type="match status" value="1"/>
</dbReference>
<name>RL25_NEOSM</name>
<reference key="1">
    <citation type="journal article" date="2006" name="PLoS Genet.">
        <title>Comparative genomics of emerging human ehrlichiosis agents.</title>
        <authorList>
            <person name="Dunning Hotopp J.C."/>
            <person name="Lin M."/>
            <person name="Madupu R."/>
            <person name="Crabtree J."/>
            <person name="Angiuoli S.V."/>
            <person name="Eisen J.A."/>
            <person name="Seshadri R."/>
            <person name="Ren Q."/>
            <person name="Wu M."/>
            <person name="Utterback T.R."/>
            <person name="Smith S."/>
            <person name="Lewis M."/>
            <person name="Khouri H."/>
            <person name="Zhang C."/>
            <person name="Niu H."/>
            <person name="Lin Q."/>
            <person name="Ohashi N."/>
            <person name="Zhi N."/>
            <person name="Nelson W.C."/>
            <person name="Brinkac L.M."/>
            <person name="Dodson R.J."/>
            <person name="Rosovitz M.J."/>
            <person name="Sundaram J.P."/>
            <person name="Daugherty S.C."/>
            <person name="Davidsen T."/>
            <person name="Durkin A.S."/>
            <person name="Gwinn M.L."/>
            <person name="Haft D.H."/>
            <person name="Selengut J.D."/>
            <person name="Sullivan S.A."/>
            <person name="Zafar N."/>
            <person name="Zhou L."/>
            <person name="Benahmed F."/>
            <person name="Forberger H."/>
            <person name="Halpin R."/>
            <person name="Mulligan S."/>
            <person name="Robinson J."/>
            <person name="White O."/>
            <person name="Rikihisa Y."/>
            <person name="Tettelin H."/>
        </authorList>
    </citation>
    <scope>NUCLEOTIDE SEQUENCE [LARGE SCALE GENOMIC DNA]</scope>
    <source>
        <strain>ATCC VR-367 / Miyayama</strain>
    </source>
</reference>
<protein>
    <recommendedName>
        <fullName evidence="1">Large ribosomal subunit protein bL25</fullName>
    </recommendedName>
    <alternativeName>
        <fullName evidence="2">50S ribosomal protein L25</fullName>
    </alternativeName>
    <alternativeName>
        <fullName evidence="1">General stress protein CTC</fullName>
    </alternativeName>
</protein>
<proteinExistence type="inferred from homology"/>
<gene>
    <name evidence="1" type="primary">rplY</name>
    <name evidence="1" type="synonym">ctc</name>
    <name type="ordered locus">NSE_0306</name>
</gene>
<accession>Q2GEA0</accession>
<comment type="function">
    <text evidence="1">This is one of the proteins that binds to the 5S RNA in the ribosome where it forms part of the central protuberance.</text>
</comment>
<comment type="subunit">
    <text evidence="1">Part of the 50S ribosomal subunit; part of the 5S rRNA/L5/L18/L25 subcomplex. Contacts the 5S rRNA. Binds to the 5S rRNA independently of L5 and L18.</text>
</comment>
<comment type="similarity">
    <text evidence="1">Belongs to the bacterial ribosomal protein bL25 family. CTC subfamily.</text>
</comment>
<sequence>MVVSIECIPRTSFGRNSANVLRRSGFVPAVIYGKERENINVAISVRDVSKHFAVLSGSGVVELSCEGKVYKVVPKAYELHPVSSVVLHLDFVFAGEHASKFQVPLNFVNSGKSEAIRLGAMLNIVKRTVLVRCTAANLPKSIPVDIENAKVGDSIKFSDLVFPDGVVPLARDANSVVATVVGKKVKAGTVAATA</sequence>
<evidence type="ECO:0000255" key="1">
    <source>
        <dbReference type="HAMAP-Rule" id="MF_01334"/>
    </source>
</evidence>
<evidence type="ECO:0000305" key="2"/>